<proteinExistence type="inferred from homology"/>
<organism>
    <name type="scientific">Chlorobium luteolum (strain DSM 273 / BCRC 81028 / 2530)</name>
    <name type="common">Pelodictyon luteolum</name>
    <dbReference type="NCBI Taxonomy" id="319225"/>
    <lineage>
        <taxon>Bacteria</taxon>
        <taxon>Pseudomonadati</taxon>
        <taxon>Chlorobiota</taxon>
        <taxon>Chlorobiia</taxon>
        <taxon>Chlorobiales</taxon>
        <taxon>Chlorobiaceae</taxon>
        <taxon>Chlorobium/Pelodictyon group</taxon>
        <taxon>Pelodictyon</taxon>
    </lineage>
</organism>
<reference key="1">
    <citation type="submission" date="2005-08" db="EMBL/GenBank/DDBJ databases">
        <title>Complete sequence of Pelodictyon luteolum DSM 273.</title>
        <authorList>
            <consortium name="US DOE Joint Genome Institute"/>
            <person name="Copeland A."/>
            <person name="Lucas S."/>
            <person name="Lapidus A."/>
            <person name="Barry K."/>
            <person name="Detter J.C."/>
            <person name="Glavina T."/>
            <person name="Hammon N."/>
            <person name="Israni S."/>
            <person name="Pitluck S."/>
            <person name="Bryant D."/>
            <person name="Schmutz J."/>
            <person name="Larimer F."/>
            <person name="Land M."/>
            <person name="Kyrpides N."/>
            <person name="Ivanova N."/>
            <person name="Richardson P."/>
        </authorList>
    </citation>
    <scope>NUCLEOTIDE SEQUENCE [LARGE SCALE GENOMIC DNA]</scope>
    <source>
        <strain>DSM 273 / BCRC 81028 / 2530</strain>
    </source>
</reference>
<name>UPPP_CHLL3</name>
<gene>
    <name evidence="1" type="primary">uppP</name>
    <name type="ordered locus">Plut_0444</name>
</gene>
<sequence>MTLIQAILLGIIQGLTEFLPISSTAHLRIIPALAGWEDPGAAFTAIIQIGTLGAVMLYFRRDILSIVKSVATGLWKGNPLHDGEAKMGWMIAAGTLPIVAFGLLFKHEIETTLRSLYWISGALIILALVLSLAEWKIKKRLEEGHPLKSMEDIGWKEALLIGLAQAIALIPGSSRSGTTITGGLLLNLSRETAARFSFLLSLPAVFAAGAFELYKTWDLITADPGNIMNLAVATITSGIVGYLSIAFLLNYLKSHTTSIFIAYRLAAGAGLLLLLGGGTILP</sequence>
<accession>Q3B5P9</accession>
<protein>
    <recommendedName>
        <fullName evidence="1">Undecaprenyl-diphosphatase</fullName>
        <ecNumber evidence="1">3.6.1.27</ecNumber>
    </recommendedName>
    <alternativeName>
        <fullName evidence="1">Bacitracin resistance protein</fullName>
    </alternativeName>
    <alternativeName>
        <fullName evidence="1">Undecaprenyl pyrophosphate phosphatase</fullName>
    </alternativeName>
</protein>
<dbReference type="EC" id="3.6.1.27" evidence="1"/>
<dbReference type="EMBL" id="CP000096">
    <property type="protein sequence ID" value="ABB23332.1"/>
    <property type="molecule type" value="Genomic_DNA"/>
</dbReference>
<dbReference type="RefSeq" id="WP_011357207.1">
    <property type="nucleotide sequence ID" value="NC_007512.1"/>
</dbReference>
<dbReference type="SMR" id="Q3B5P9"/>
<dbReference type="STRING" id="319225.Plut_0444"/>
<dbReference type="KEGG" id="plt:Plut_0444"/>
<dbReference type="eggNOG" id="COG1968">
    <property type="taxonomic scope" value="Bacteria"/>
</dbReference>
<dbReference type="HOGENOM" id="CLU_060296_1_0_10"/>
<dbReference type="OrthoDB" id="9808289at2"/>
<dbReference type="Proteomes" id="UP000002709">
    <property type="component" value="Chromosome"/>
</dbReference>
<dbReference type="GO" id="GO:0005886">
    <property type="term" value="C:plasma membrane"/>
    <property type="evidence" value="ECO:0007669"/>
    <property type="project" value="UniProtKB-SubCell"/>
</dbReference>
<dbReference type="GO" id="GO:0050380">
    <property type="term" value="F:undecaprenyl-diphosphatase activity"/>
    <property type="evidence" value="ECO:0007669"/>
    <property type="project" value="UniProtKB-UniRule"/>
</dbReference>
<dbReference type="GO" id="GO:0071555">
    <property type="term" value="P:cell wall organization"/>
    <property type="evidence" value="ECO:0007669"/>
    <property type="project" value="UniProtKB-KW"/>
</dbReference>
<dbReference type="GO" id="GO:0009252">
    <property type="term" value="P:peptidoglycan biosynthetic process"/>
    <property type="evidence" value="ECO:0007669"/>
    <property type="project" value="UniProtKB-KW"/>
</dbReference>
<dbReference type="GO" id="GO:0008360">
    <property type="term" value="P:regulation of cell shape"/>
    <property type="evidence" value="ECO:0007669"/>
    <property type="project" value="UniProtKB-KW"/>
</dbReference>
<dbReference type="GO" id="GO:0046677">
    <property type="term" value="P:response to antibiotic"/>
    <property type="evidence" value="ECO:0007669"/>
    <property type="project" value="UniProtKB-UniRule"/>
</dbReference>
<dbReference type="HAMAP" id="MF_01006">
    <property type="entry name" value="Undec_diphosphatase"/>
    <property type="match status" value="1"/>
</dbReference>
<dbReference type="InterPro" id="IPR003824">
    <property type="entry name" value="UppP"/>
</dbReference>
<dbReference type="NCBIfam" id="TIGR00753">
    <property type="entry name" value="undec_PP_bacA"/>
    <property type="match status" value="1"/>
</dbReference>
<dbReference type="PANTHER" id="PTHR30622">
    <property type="entry name" value="UNDECAPRENYL-DIPHOSPHATASE"/>
    <property type="match status" value="1"/>
</dbReference>
<dbReference type="PANTHER" id="PTHR30622:SF4">
    <property type="entry name" value="UNDECAPRENYL-DIPHOSPHATASE"/>
    <property type="match status" value="1"/>
</dbReference>
<dbReference type="Pfam" id="PF02673">
    <property type="entry name" value="BacA"/>
    <property type="match status" value="1"/>
</dbReference>
<comment type="function">
    <text evidence="1">Catalyzes the dephosphorylation of undecaprenyl diphosphate (UPP). Confers resistance to bacitracin.</text>
</comment>
<comment type="catalytic activity">
    <reaction evidence="1">
        <text>di-trans,octa-cis-undecaprenyl diphosphate + H2O = di-trans,octa-cis-undecaprenyl phosphate + phosphate + H(+)</text>
        <dbReference type="Rhea" id="RHEA:28094"/>
        <dbReference type="ChEBI" id="CHEBI:15377"/>
        <dbReference type="ChEBI" id="CHEBI:15378"/>
        <dbReference type="ChEBI" id="CHEBI:43474"/>
        <dbReference type="ChEBI" id="CHEBI:58405"/>
        <dbReference type="ChEBI" id="CHEBI:60392"/>
        <dbReference type="EC" id="3.6.1.27"/>
    </reaction>
</comment>
<comment type="subcellular location">
    <subcellularLocation>
        <location evidence="1">Cell inner membrane</location>
        <topology evidence="1">Multi-pass membrane protein</topology>
    </subcellularLocation>
</comment>
<comment type="miscellaneous">
    <text>Bacitracin is thought to be involved in the inhibition of peptidoglycan synthesis by sequestering undecaprenyl diphosphate, thereby reducing the pool of lipid carrier available.</text>
</comment>
<comment type="similarity">
    <text evidence="1">Belongs to the UppP family.</text>
</comment>
<feature type="chain" id="PRO_0000227625" description="Undecaprenyl-diphosphatase">
    <location>
        <begin position="1"/>
        <end position="282"/>
    </location>
</feature>
<feature type="transmembrane region" description="Helical" evidence="1">
    <location>
        <begin position="1"/>
        <end position="21"/>
    </location>
</feature>
<feature type="transmembrane region" description="Helical" evidence="1">
    <location>
        <begin position="39"/>
        <end position="59"/>
    </location>
</feature>
<feature type="transmembrane region" description="Helical" evidence="1">
    <location>
        <begin position="85"/>
        <end position="105"/>
    </location>
</feature>
<feature type="transmembrane region" description="Helical" evidence="1">
    <location>
        <begin position="115"/>
        <end position="135"/>
    </location>
</feature>
<feature type="transmembrane region" description="Helical" evidence="1">
    <location>
        <begin position="153"/>
        <end position="173"/>
    </location>
</feature>
<feature type="transmembrane region" description="Helical" evidence="1">
    <location>
        <begin position="193"/>
        <end position="213"/>
    </location>
</feature>
<feature type="transmembrane region" description="Helical" evidence="1">
    <location>
        <begin position="229"/>
        <end position="249"/>
    </location>
</feature>
<feature type="transmembrane region" description="Helical" evidence="1">
    <location>
        <begin position="259"/>
        <end position="279"/>
    </location>
</feature>
<keyword id="KW-0046">Antibiotic resistance</keyword>
<keyword id="KW-0997">Cell inner membrane</keyword>
<keyword id="KW-1003">Cell membrane</keyword>
<keyword id="KW-0133">Cell shape</keyword>
<keyword id="KW-0961">Cell wall biogenesis/degradation</keyword>
<keyword id="KW-0378">Hydrolase</keyword>
<keyword id="KW-0472">Membrane</keyword>
<keyword id="KW-0573">Peptidoglycan synthesis</keyword>
<keyword id="KW-1185">Reference proteome</keyword>
<keyword id="KW-0812">Transmembrane</keyword>
<keyword id="KW-1133">Transmembrane helix</keyword>
<evidence type="ECO:0000255" key="1">
    <source>
        <dbReference type="HAMAP-Rule" id="MF_01006"/>
    </source>
</evidence>